<name>RL21_BACAN</name>
<feature type="chain" id="PRO_0000269275" description="Large ribosomal subunit protein bL21">
    <location>
        <begin position="1"/>
        <end position="102"/>
    </location>
</feature>
<evidence type="ECO:0000255" key="1">
    <source>
        <dbReference type="HAMAP-Rule" id="MF_01363"/>
    </source>
</evidence>
<evidence type="ECO:0000305" key="2"/>
<reference key="1">
    <citation type="journal article" date="2003" name="Nature">
        <title>The genome sequence of Bacillus anthracis Ames and comparison to closely related bacteria.</title>
        <authorList>
            <person name="Read T.D."/>
            <person name="Peterson S.N."/>
            <person name="Tourasse N.J."/>
            <person name="Baillie L.W."/>
            <person name="Paulsen I.T."/>
            <person name="Nelson K.E."/>
            <person name="Tettelin H."/>
            <person name="Fouts D.E."/>
            <person name="Eisen J.A."/>
            <person name="Gill S.R."/>
            <person name="Holtzapple E.K."/>
            <person name="Okstad O.A."/>
            <person name="Helgason E."/>
            <person name="Rilstone J."/>
            <person name="Wu M."/>
            <person name="Kolonay J.F."/>
            <person name="Beanan M.J."/>
            <person name="Dodson R.J."/>
            <person name="Brinkac L.M."/>
            <person name="Gwinn M.L."/>
            <person name="DeBoy R.T."/>
            <person name="Madpu R."/>
            <person name="Daugherty S.C."/>
            <person name="Durkin A.S."/>
            <person name="Haft D.H."/>
            <person name="Nelson W.C."/>
            <person name="Peterson J.D."/>
            <person name="Pop M."/>
            <person name="Khouri H.M."/>
            <person name="Radune D."/>
            <person name="Benton J.L."/>
            <person name="Mahamoud Y."/>
            <person name="Jiang L."/>
            <person name="Hance I.R."/>
            <person name="Weidman J.F."/>
            <person name="Berry K.J."/>
            <person name="Plaut R.D."/>
            <person name="Wolf A.M."/>
            <person name="Watkins K.L."/>
            <person name="Nierman W.C."/>
            <person name="Hazen A."/>
            <person name="Cline R.T."/>
            <person name="Redmond C."/>
            <person name="Thwaite J.E."/>
            <person name="White O."/>
            <person name="Salzberg S.L."/>
            <person name="Thomason B."/>
            <person name="Friedlander A.M."/>
            <person name="Koehler T.M."/>
            <person name="Hanna P.C."/>
            <person name="Kolstoe A.-B."/>
            <person name="Fraser C.M."/>
        </authorList>
    </citation>
    <scope>NUCLEOTIDE SEQUENCE [LARGE SCALE GENOMIC DNA]</scope>
    <source>
        <strain>Ames / isolate Porton</strain>
    </source>
</reference>
<reference key="2">
    <citation type="submission" date="2004-01" db="EMBL/GenBank/DDBJ databases">
        <title>Complete genome sequence of Bacillus anthracis Sterne.</title>
        <authorList>
            <person name="Brettin T.S."/>
            <person name="Bruce D."/>
            <person name="Challacombe J.F."/>
            <person name="Gilna P."/>
            <person name="Han C."/>
            <person name="Hill K."/>
            <person name="Hitchcock P."/>
            <person name="Jackson P."/>
            <person name="Keim P."/>
            <person name="Longmire J."/>
            <person name="Lucas S."/>
            <person name="Okinaka R."/>
            <person name="Richardson P."/>
            <person name="Rubin E."/>
            <person name="Tice H."/>
        </authorList>
    </citation>
    <scope>NUCLEOTIDE SEQUENCE [LARGE SCALE GENOMIC DNA]</scope>
    <source>
        <strain>Sterne</strain>
    </source>
</reference>
<reference key="3">
    <citation type="journal article" date="2009" name="J. Bacteriol.">
        <title>The complete genome sequence of Bacillus anthracis Ames 'Ancestor'.</title>
        <authorList>
            <person name="Ravel J."/>
            <person name="Jiang L."/>
            <person name="Stanley S.T."/>
            <person name="Wilson M.R."/>
            <person name="Decker R.S."/>
            <person name="Read T.D."/>
            <person name="Worsham P."/>
            <person name="Keim P.S."/>
            <person name="Salzberg S.L."/>
            <person name="Fraser-Liggett C.M."/>
            <person name="Rasko D.A."/>
        </authorList>
    </citation>
    <scope>NUCLEOTIDE SEQUENCE [LARGE SCALE GENOMIC DNA]</scope>
    <source>
        <strain>Ames ancestor</strain>
    </source>
</reference>
<keyword id="KW-1185">Reference proteome</keyword>
<keyword id="KW-0687">Ribonucleoprotein</keyword>
<keyword id="KW-0689">Ribosomal protein</keyword>
<keyword id="KW-0694">RNA-binding</keyword>
<keyword id="KW-0699">rRNA-binding</keyword>
<gene>
    <name evidence="1" type="primary">rplU</name>
    <name type="ordered locus">BA_4676</name>
    <name type="ordered locus">GBAA_4676</name>
    <name type="ordered locus">BAS4342</name>
</gene>
<proteinExistence type="inferred from homology"/>
<accession>Q81LE6</accession>
<accession>Q6HSU9</accession>
<accession>Q6KM42</accession>
<organism>
    <name type="scientific">Bacillus anthracis</name>
    <dbReference type="NCBI Taxonomy" id="1392"/>
    <lineage>
        <taxon>Bacteria</taxon>
        <taxon>Bacillati</taxon>
        <taxon>Bacillota</taxon>
        <taxon>Bacilli</taxon>
        <taxon>Bacillales</taxon>
        <taxon>Bacillaceae</taxon>
        <taxon>Bacillus</taxon>
        <taxon>Bacillus cereus group</taxon>
    </lineage>
</organism>
<dbReference type="EMBL" id="AE016879">
    <property type="protein sequence ID" value="AAP28376.1"/>
    <property type="molecule type" value="Genomic_DNA"/>
</dbReference>
<dbReference type="EMBL" id="AE017225">
    <property type="protein sequence ID" value="AAT56640.1"/>
    <property type="molecule type" value="Genomic_DNA"/>
</dbReference>
<dbReference type="EMBL" id="AE017334">
    <property type="protein sequence ID" value="AAT33799.1"/>
    <property type="molecule type" value="Genomic_DNA"/>
</dbReference>
<dbReference type="RefSeq" id="NP_846890.1">
    <property type="nucleotide sequence ID" value="NC_003997.3"/>
</dbReference>
<dbReference type="RefSeq" id="WP_000270907.1">
    <property type="nucleotide sequence ID" value="NZ_WXXJ01000027.1"/>
</dbReference>
<dbReference type="RefSeq" id="YP_030589.1">
    <property type="nucleotide sequence ID" value="NC_005945.1"/>
</dbReference>
<dbReference type="SMR" id="Q81LE6"/>
<dbReference type="STRING" id="261594.GBAA_4676"/>
<dbReference type="DNASU" id="1085870"/>
<dbReference type="GeneID" id="93006656"/>
<dbReference type="KEGG" id="ban:BA_4676"/>
<dbReference type="KEGG" id="bar:GBAA_4676"/>
<dbReference type="KEGG" id="bat:BAS4342"/>
<dbReference type="PATRIC" id="fig|198094.11.peg.4642"/>
<dbReference type="eggNOG" id="COG0261">
    <property type="taxonomic scope" value="Bacteria"/>
</dbReference>
<dbReference type="HOGENOM" id="CLU_061463_3_2_9"/>
<dbReference type="OMA" id="HRQPFTK"/>
<dbReference type="OrthoDB" id="9813334at2"/>
<dbReference type="Proteomes" id="UP000000427">
    <property type="component" value="Chromosome"/>
</dbReference>
<dbReference type="Proteomes" id="UP000000594">
    <property type="component" value="Chromosome"/>
</dbReference>
<dbReference type="GO" id="GO:0005737">
    <property type="term" value="C:cytoplasm"/>
    <property type="evidence" value="ECO:0007669"/>
    <property type="project" value="UniProtKB-ARBA"/>
</dbReference>
<dbReference type="GO" id="GO:1990904">
    <property type="term" value="C:ribonucleoprotein complex"/>
    <property type="evidence" value="ECO:0007669"/>
    <property type="project" value="UniProtKB-KW"/>
</dbReference>
<dbReference type="GO" id="GO:0005840">
    <property type="term" value="C:ribosome"/>
    <property type="evidence" value="ECO:0007669"/>
    <property type="project" value="UniProtKB-KW"/>
</dbReference>
<dbReference type="GO" id="GO:0019843">
    <property type="term" value="F:rRNA binding"/>
    <property type="evidence" value="ECO:0007669"/>
    <property type="project" value="UniProtKB-UniRule"/>
</dbReference>
<dbReference type="GO" id="GO:0003735">
    <property type="term" value="F:structural constituent of ribosome"/>
    <property type="evidence" value="ECO:0007669"/>
    <property type="project" value="InterPro"/>
</dbReference>
<dbReference type="GO" id="GO:0006412">
    <property type="term" value="P:translation"/>
    <property type="evidence" value="ECO:0007669"/>
    <property type="project" value="UniProtKB-UniRule"/>
</dbReference>
<dbReference type="HAMAP" id="MF_01363">
    <property type="entry name" value="Ribosomal_bL21"/>
    <property type="match status" value="1"/>
</dbReference>
<dbReference type="InterPro" id="IPR028909">
    <property type="entry name" value="bL21-like"/>
</dbReference>
<dbReference type="InterPro" id="IPR036164">
    <property type="entry name" value="bL21-like_sf"/>
</dbReference>
<dbReference type="InterPro" id="IPR001787">
    <property type="entry name" value="Ribosomal_bL21"/>
</dbReference>
<dbReference type="InterPro" id="IPR018258">
    <property type="entry name" value="Ribosomal_bL21_CS"/>
</dbReference>
<dbReference type="NCBIfam" id="TIGR00061">
    <property type="entry name" value="L21"/>
    <property type="match status" value="1"/>
</dbReference>
<dbReference type="PANTHER" id="PTHR21349">
    <property type="entry name" value="50S RIBOSOMAL PROTEIN L21"/>
    <property type="match status" value="1"/>
</dbReference>
<dbReference type="PANTHER" id="PTHR21349:SF0">
    <property type="entry name" value="LARGE RIBOSOMAL SUBUNIT PROTEIN BL21M"/>
    <property type="match status" value="1"/>
</dbReference>
<dbReference type="Pfam" id="PF00829">
    <property type="entry name" value="Ribosomal_L21p"/>
    <property type="match status" value="1"/>
</dbReference>
<dbReference type="SUPFAM" id="SSF141091">
    <property type="entry name" value="L21p-like"/>
    <property type="match status" value="1"/>
</dbReference>
<dbReference type="PROSITE" id="PS01169">
    <property type="entry name" value="RIBOSOMAL_L21"/>
    <property type="match status" value="1"/>
</dbReference>
<comment type="function">
    <text evidence="1">This protein binds to 23S rRNA in the presence of protein L20.</text>
</comment>
<comment type="subunit">
    <text evidence="1">Part of the 50S ribosomal subunit. Contacts protein L20.</text>
</comment>
<comment type="similarity">
    <text evidence="1">Belongs to the bacterial ribosomal protein bL21 family.</text>
</comment>
<protein>
    <recommendedName>
        <fullName evidence="1">Large ribosomal subunit protein bL21</fullName>
    </recommendedName>
    <alternativeName>
        <fullName evidence="2">50S ribosomal protein L21</fullName>
    </alternativeName>
</protein>
<sequence length="102" mass="11191">MYAIIETGGKQIKVEAGQAIYIEKLDVEAGETVTFDKVLFVGGENVKVGSPVVEGATVTAKVEKQGRAKKIIVFKYKAKKNNRKKQGHRQPYTKLVVEAINA</sequence>